<evidence type="ECO:0000250" key="1">
    <source>
        <dbReference type="UniProtKB" id="A0A193H362"/>
    </source>
</evidence>
<evidence type="ECO:0000255" key="2"/>
<evidence type="ECO:0000256" key="3">
    <source>
        <dbReference type="SAM" id="MobiDB-lite"/>
    </source>
</evidence>
<evidence type="ECO:0000269" key="4">
    <source>
    </source>
</evidence>
<evidence type="ECO:0000303" key="5">
    <source>
    </source>
</evidence>
<evidence type="ECO:0000305" key="6"/>
<evidence type="ECO:0000305" key="7">
    <source>
    </source>
</evidence>
<evidence type="ECO:0000312" key="8">
    <source>
        <dbReference type="EMBL" id="ANN87764.1"/>
    </source>
</evidence>
<sequence length="75" mass="8422">MAKLKKSLFLVLFLGLVSLSICEEEKREEENEEVQEDDDQSEEKRGFLDVVKHVGKAVGKAALNAVTEMVNQAEQ</sequence>
<organism evidence="8">
    <name type="scientific">Cruziohyla calcarifer</name>
    <name type="common">Splendid leaf frog</name>
    <name type="synonym">Agalychnis calcarifer</name>
    <dbReference type="NCBI Taxonomy" id="318249"/>
    <lineage>
        <taxon>Eukaryota</taxon>
        <taxon>Metazoa</taxon>
        <taxon>Chordata</taxon>
        <taxon>Craniata</taxon>
        <taxon>Vertebrata</taxon>
        <taxon>Euteleostomi</taxon>
        <taxon>Amphibia</taxon>
        <taxon>Batrachia</taxon>
        <taxon>Anura</taxon>
        <taxon>Neobatrachia</taxon>
        <taxon>Hyloidea</taxon>
        <taxon>Hylidae</taxon>
        <taxon>Phyllomedusinae</taxon>
        <taxon>Cruziohyla</taxon>
    </lineage>
</organism>
<accession>A0A193H365</accession>
<name>CZS7_CRUCA</name>
<proteinExistence type="evidence at protein level"/>
<dbReference type="EMBL" id="KX065084">
    <property type="protein sequence ID" value="ANN87764.1"/>
    <property type="molecule type" value="mRNA"/>
</dbReference>
<dbReference type="GO" id="GO:0005576">
    <property type="term" value="C:extracellular region"/>
    <property type="evidence" value="ECO:0007669"/>
    <property type="project" value="UniProtKB-SubCell"/>
</dbReference>
<dbReference type="GO" id="GO:0006952">
    <property type="term" value="P:defense response"/>
    <property type="evidence" value="ECO:0007669"/>
    <property type="project" value="UniProtKB-KW"/>
</dbReference>
<dbReference type="InterPro" id="IPR004275">
    <property type="entry name" value="Frog_antimicrobial_propeptide"/>
</dbReference>
<dbReference type="InterPro" id="IPR016322">
    <property type="entry name" value="FSAP"/>
</dbReference>
<dbReference type="Pfam" id="PF03032">
    <property type="entry name" value="FSAP_sig_propep"/>
    <property type="match status" value="1"/>
</dbReference>
<dbReference type="PIRSF" id="PIRSF001822">
    <property type="entry name" value="Dermaseptin_precursor"/>
    <property type="match status" value="1"/>
</dbReference>
<reference evidence="8" key="1">
    <citation type="journal article" date="2016" name="J. Proteomics">
        <title>Peptidomic approach identifies cruzioseptins, a new family of potent antimicrobial peptides in the splendid leaf frog, Cruziohyla calcarifer.</title>
        <authorList>
            <person name="Proano-Bolanos C."/>
            <person name="Zhou M."/>
            <person name="Wang L."/>
            <person name="Coloma L.A."/>
            <person name="Chen T."/>
            <person name="Shaw C."/>
        </authorList>
    </citation>
    <scope>NUCLEOTIDE SEQUENCE [MRNA]</scope>
    <scope>SUBCELLULAR LOCATION</scope>
    <scope>MASS SPECTROMETRY</scope>
    <scope>IDENTIFICATION BY MASS SPECTROMETRY</scope>
    <source>
        <tissue evidence="8">Skin secretion</tissue>
    </source>
</reference>
<keyword id="KW-0878">Amphibian defense peptide</keyword>
<keyword id="KW-0929">Antimicrobial</keyword>
<keyword id="KW-0165">Cleavage on pair of basic residues</keyword>
<keyword id="KW-0964">Secreted</keyword>
<keyword id="KW-0732">Signal</keyword>
<feature type="signal peptide" evidence="2">
    <location>
        <begin position="1"/>
        <end position="22"/>
    </location>
</feature>
<feature type="propeptide" id="PRO_0000439472" evidence="7">
    <location>
        <begin position="23"/>
        <end position="43"/>
    </location>
</feature>
<feature type="peptide" id="PRO_0000439473" description="Cruzioseptin-7" evidence="4">
    <location>
        <begin position="46"/>
        <end position="75"/>
    </location>
</feature>
<feature type="region of interest" description="Disordered" evidence="3">
    <location>
        <begin position="25"/>
        <end position="44"/>
    </location>
</feature>
<feature type="compositionally biased region" description="Acidic residues" evidence="3">
    <location>
        <begin position="30"/>
        <end position="41"/>
    </location>
</feature>
<comment type="function">
    <text evidence="1">Has antimicrobial activity.</text>
</comment>
<comment type="subcellular location">
    <subcellularLocation>
        <location evidence="4">Secreted</location>
    </subcellularLocation>
</comment>
<comment type="tissue specificity">
    <text evidence="7">Expressed by the skin glands.</text>
</comment>
<comment type="mass spectrometry" mass="3122.65" method="Electrospray" evidence="4"/>
<comment type="similarity">
    <text evidence="6">Belongs to the frog skin active peptide (FSAP) family. Cruzioseptin subfamily.</text>
</comment>
<protein>
    <recommendedName>
        <fullName evidence="5">Cruzioseptin-7</fullName>
        <shortName evidence="5">CZS-7</shortName>
    </recommendedName>
</protein>